<dbReference type="EMBL" id="CP000096">
    <property type="protein sequence ID" value="ABB23291.1"/>
    <property type="molecule type" value="Genomic_DNA"/>
</dbReference>
<dbReference type="RefSeq" id="WP_011357166.1">
    <property type="nucleotide sequence ID" value="NC_007512.1"/>
</dbReference>
<dbReference type="SMR" id="Q3B5U0"/>
<dbReference type="STRING" id="319225.Plut_0403"/>
<dbReference type="KEGG" id="plt:Plut_0403"/>
<dbReference type="eggNOG" id="COG0052">
    <property type="taxonomic scope" value="Bacteria"/>
</dbReference>
<dbReference type="HOGENOM" id="CLU_040318_1_2_10"/>
<dbReference type="OrthoDB" id="9808036at2"/>
<dbReference type="Proteomes" id="UP000002709">
    <property type="component" value="Chromosome"/>
</dbReference>
<dbReference type="GO" id="GO:0022627">
    <property type="term" value="C:cytosolic small ribosomal subunit"/>
    <property type="evidence" value="ECO:0007669"/>
    <property type="project" value="TreeGrafter"/>
</dbReference>
<dbReference type="GO" id="GO:0003735">
    <property type="term" value="F:structural constituent of ribosome"/>
    <property type="evidence" value="ECO:0007669"/>
    <property type="project" value="InterPro"/>
</dbReference>
<dbReference type="GO" id="GO:0006412">
    <property type="term" value="P:translation"/>
    <property type="evidence" value="ECO:0007669"/>
    <property type="project" value="UniProtKB-UniRule"/>
</dbReference>
<dbReference type="CDD" id="cd01425">
    <property type="entry name" value="RPS2"/>
    <property type="match status" value="1"/>
</dbReference>
<dbReference type="FunFam" id="1.10.287.610:FF:000001">
    <property type="entry name" value="30S ribosomal protein S2"/>
    <property type="match status" value="1"/>
</dbReference>
<dbReference type="Gene3D" id="3.40.50.10490">
    <property type="entry name" value="Glucose-6-phosphate isomerase like protein, domain 1"/>
    <property type="match status" value="1"/>
</dbReference>
<dbReference type="Gene3D" id="1.10.287.610">
    <property type="entry name" value="Helix hairpin bin"/>
    <property type="match status" value="1"/>
</dbReference>
<dbReference type="HAMAP" id="MF_00291_B">
    <property type="entry name" value="Ribosomal_uS2_B"/>
    <property type="match status" value="1"/>
</dbReference>
<dbReference type="InterPro" id="IPR001865">
    <property type="entry name" value="Ribosomal_uS2"/>
</dbReference>
<dbReference type="InterPro" id="IPR005706">
    <property type="entry name" value="Ribosomal_uS2_bac/mit/plastid"/>
</dbReference>
<dbReference type="InterPro" id="IPR018130">
    <property type="entry name" value="Ribosomal_uS2_CS"/>
</dbReference>
<dbReference type="InterPro" id="IPR023591">
    <property type="entry name" value="Ribosomal_uS2_flav_dom_sf"/>
</dbReference>
<dbReference type="NCBIfam" id="TIGR01011">
    <property type="entry name" value="rpsB_bact"/>
    <property type="match status" value="1"/>
</dbReference>
<dbReference type="PANTHER" id="PTHR12534">
    <property type="entry name" value="30S RIBOSOMAL PROTEIN S2 PROKARYOTIC AND ORGANELLAR"/>
    <property type="match status" value="1"/>
</dbReference>
<dbReference type="PANTHER" id="PTHR12534:SF0">
    <property type="entry name" value="SMALL RIBOSOMAL SUBUNIT PROTEIN US2M"/>
    <property type="match status" value="1"/>
</dbReference>
<dbReference type="Pfam" id="PF00318">
    <property type="entry name" value="Ribosomal_S2"/>
    <property type="match status" value="1"/>
</dbReference>
<dbReference type="PRINTS" id="PR00395">
    <property type="entry name" value="RIBOSOMALS2"/>
</dbReference>
<dbReference type="SUPFAM" id="SSF52313">
    <property type="entry name" value="Ribosomal protein S2"/>
    <property type="match status" value="1"/>
</dbReference>
<dbReference type="PROSITE" id="PS00962">
    <property type="entry name" value="RIBOSOMAL_S2_1"/>
    <property type="match status" value="1"/>
</dbReference>
<dbReference type="PROSITE" id="PS00963">
    <property type="entry name" value="RIBOSOMAL_S2_2"/>
    <property type="match status" value="1"/>
</dbReference>
<evidence type="ECO:0000255" key="1">
    <source>
        <dbReference type="HAMAP-Rule" id="MF_00291"/>
    </source>
</evidence>
<evidence type="ECO:0000305" key="2"/>
<accession>Q3B5U0</accession>
<sequence length="253" mass="28390">MSHFQLEEMLRAGVHFGHLARRWCPKMKPYIFMEKNGVHIIDLQKTLVLADDALNALDAIAQTGREIMFVGTKKQAKQIIAAEATRAGMPFVCERWLGGMLTNFSTIRQSIRRMNSIERMETDGTFDMITKKERLMLAREREKLMRILGGIATMTRLPAALFIVDIKKEHIAIKEARSLGIPIFAMVDTNCDPEQVDYVIPANDDAIRSIQLMVKAVADTVVNARAMKVEQEVLAEMDAPEVDAAEDAAQSAE</sequence>
<gene>
    <name evidence="1" type="primary">rpsB</name>
    <name type="ordered locus">Plut_0403</name>
</gene>
<comment type="similarity">
    <text evidence="1">Belongs to the universal ribosomal protein uS2 family.</text>
</comment>
<organism>
    <name type="scientific">Chlorobium luteolum (strain DSM 273 / BCRC 81028 / 2530)</name>
    <name type="common">Pelodictyon luteolum</name>
    <dbReference type="NCBI Taxonomy" id="319225"/>
    <lineage>
        <taxon>Bacteria</taxon>
        <taxon>Pseudomonadati</taxon>
        <taxon>Chlorobiota</taxon>
        <taxon>Chlorobiia</taxon>
        <taxon>Chlorobiales</taxon>
        <taxon>Chlorobiaceae</taxon>
        <taxon>Chlorobium/Pelodictyon group</taxon>
        <taxon>Pelodictyon</taxon>
    </lineage>
</organism>
<proteinExistence type="inferred from homology"/>
<protein>
    <recommendedName>
        <fullName evidence="1">Small ribosomal subunit protein uS2</fullName>
    </recommendedName>
    <alternativeName>
        <fullName evidence="2">30S ribosomal protein S2</fullName>
    </alternativeName>
</protein>
<feature type="chain" id="PRO_1000004018" description="Small ribosomal subunit protein uS2">
    <location>
        <begin position="1"/>
        <end position="253"/>
    </location>
</feature>
<reference key="1">
    <citation type="submission" date="2005-08" db="EMBL/GenBank/DDBJ databases">
        <title>Complete sequence of Pelodictyon luteolum DSM 273.</title>
        <authorList>
            <consortium name="US DOE Joint Genome Institute"/>
            <person name="Copeland A."/>
            <person name="Lucas S."/>
            <person name="Lapidus A."/>
            <person name="Barry K."/>
            <person name="Detter J.C."/>
            <person name="Glavina T."/>
            <person name="Hammon N."/>
            <person name="Israni S."/>
            <person name="Pitluck S."/>
            <person name="Bryant D."/>
            <person name="Schmutz J."/>
            <person name="Larimer F."/>
            <person name="Land M."/>
            <person name="Kyrpides N."/>
            <person name="Ivanova N."/>
            <person name="Richardson P."/>
        </authorList>
    </citation>
    <scope>NUCLEOTIDE SEQUENCE [LARGE SCALE GENOMIC DNA]</scope>
    <source>
        <strain>DSM 273 / BCRC 81028 / 2530</strain>
    </source>
</reference>
<name>RS2_CHLL3</name>
<keyword id="KW-1185">Reference proteome</keyword>
<keyword id="KW-0687">Ribonucleoprotein</keyword>
<keyword id="KW-0689">Ribosomal protein</keyword>